<evidence type="ECO:0000255" key="1">
    <source>
        <dbReference type="HAMAP-Rule" id="MF_00087"/>
    </source>
</evidence>
<evidence type="ECO:0000305" key="2"/>
<evidence type="ECO:0000305" key="3">
    <source>
    </source>
</evidence>
<protein>
    <recommendedName>
        <fullName evidence="1">Glutamyl-tRNA reductase</fullName>
        <shortName evidence="1">GluTR</shortName>
        <ecNumber evidence="1">1.2.1.70</ecNumber>
    </recommendedName>
</protein>
<feature type="chain" id="PRO_0000114079" description="Glutamyl-tRNA reductase">
    <location>
        <begin position="1"/>
        <end position="427"/>
    </location>
</feature>
<feature type="active site" description="Nucleophile" evidence="1">
    <location>
        <position position="50"/>
    </location>
</feature>
<feature type="binding site" evidence="1">
    <location>
        <begin position="49"/>
        <end position="52"/>
    </location>
    <ligand>
        <name>substrate</name>
    </ligand>
</feature>
<feature type="binding site" evidence="1">
    <location>
        <position position="109"/>
    </location>
    <ligand>
        <name>substrate</name>
    </ligand>
</feature>
<feature type="binding site" evidence="1">
    <location>
        <begin position="114"/>
        <end position="116"/>
    </location>
    <ligand>
        <name>substrate</name>
    </ligand>
</feature>
<feature type="binding site" evidence="1">
    <location>
        <position position="120"/>
    </location>
    <ligand>
        <name>substrate</name>
    </ligand>
</feature>
<feature type="binding site" evidence="1">
    <location>
        <begin position="188"/>
        <end position="193"/>
    </location>
    <ligand>
        <name>NADP(+)</name>
        <dbReference type="ChEBI" id="CHEBI:58349"/>
    </ligand>
</feature>
<feature type="site" description="Important for activity" evidence="1">
    <location>
        <position position="99"/>
    </location>
</feature>
<dbReference type="EC" id="1.2.1.70" evidence="1"/>
<dbReference type="EMBL" id="M84218">
    <property type="protein sequence ID" value="AAA27289.1"/>
    <property type="molecule type" value="Genomic_DNA"/>
</dbReference>
<dbReference type="EMBL" id="X65963">
    <property type="protein sequence ID" value="CAA46779.1"/>
    <property type="molecule type" value="Genomic_DNA"/>
</dbReference>
<dbReference type="EMBL" id="BA000022">
    <property type="protein sequence ID" value="BAA17738.1"/>
    <property type="status" value="ALT_INIT"/>
    <property type="molecule type" value="Genomic_DNA"/>
</dbReference>
<dbReference type="PIR" id="S77180">
    <property type="entry name" value="S77180"/>
</dbReference>
<dbReference type="SMR" id="P28463"/>
<dbReference type="FunCoup" id="P28463">
    <property type="interactions" value="370"/>
</dbReference>
<dbReference type="STRING" id="1148.gene:10498605"/>
<dbReference type="PaxDb" id="1148-1652819"/>
<dbReference type="EnsemblBacteria" id="BAA17738">
    <property type="protein sequence ID" value="BAA17738"/>
    <property type="gene ID" value="BAA17738"/>
</dbReference>
<dbReference type="KEGG" id="syn:slr1808"/>
<dbReference type="eggNOG" id="COG0373">
    <property type="taxonomic scope" value="Bacteria"/>
</dbReference>
<dbReference type="InParanoid" id="P28463"/>
<dbReference type="PhylomeDB" id="P28463"/>
<dbReference type="UniPathway" id="UPA00251">
    <property type="reaction ID" value="UER00316"/>
</dbReference>
<dbReference type="UniPathway" id="UPA00668"/>
<dbReference type="Proteomes" id="UP000001425">
    <property type="component" value="Chromosome"/>
</dbReference>
<dbReference type="GO" id="GO:0008883">
    <property type="term" value="F:glutamyl-tRNA reductase activity"/>
    <property type="evidence" value="ECO:0007669"/>
    <property type="project" value="UniProtKB-UniRule"/>
</dbReference>
<dbReference type="GO" id="GO:0050661">
    <property type="term" value="F:NADP binding"/>
    <property type="evidence" value="ECO:0007669"/>
    <property type="project" value="InterPro"/>
</dbReference>
<dbReference type="GO" id="GO:0015995">
    <property type="term" value="P:chlorophyll biosynthetic process"/>
    <property type="evidence" value="ECO:0007669"/>
    <property type="project" value="UniProtKB-UniRule"/>
</dbReference>
<dbReference type="GO" id="GO:0006782">
    <property type="term" value="P:protoporphyrinogen IX biosynthetic process"/>
    <property type="evidence" value="ECO:0007669"/>
    <property type="project" value="UniProtKB-UniRule"/>
</dbReference>
<dbReference type="CDD" id="cd05213">
    <property type="entry name" value="NAD_bind_Glutamyl_tRNA_reduct"/>
    <property type="match status" value="1"/>
</dbReference>
<dbReference type="FunFam" id="3.30.460.30:FF:000001">
    <property type="entry name" value="Glutamyl-tRNA reductase"/>
    <property type="match status" value="1"/>
</dbReference>
<dbReference type="FunFam" id="3.40.50.720:FF:000031">
    <property type="entry name" value="Glutamyl-tRNA reductase"/>
    <property type="match status" value="1"/>
</dbReference>
<dbReference type="Gene3D" id="3.30.460.30">
    <property type="entry name" value="Glutamyl-tRNA reductase, N-terminal domain"/>
    <property type="match status" value="1"/>
</dbReference>
<dbReference type="Gene3D" id="3.40.50.720">
    <property type="entry name" value="NAD(P)-binding Rossmann-like Domain"/>
    <property type="match status" value="1"/>
</dbReference>
<dbReference type="HAMAP" id="MF_00087">
    <property type="entry name" value="Glu_tRNA_reductase"/>
    <property type="match status" value="1"/>
</dbReference>
<dbReference type="InterPro" id="IPR000343">
    <property type="entry name" value="4pyrrol_synth_GluRdtase"/>
</dbReference>
<dbReference type="InterPro" id="IPR015896">
    <property type="entry name" value="4pyrrol_synth_GluRdtase_dimer"/>
</dbReference>
<dbReference type="InterPro" id="IPR015895">
    <property type="entry name" value="4pyrrol_synth_GluRdtase_N"/>
</dbReference>
<dbReference type="InterPro" id="IPR018214">
    <property type="entry name" value="GluRdtase_CS"/>
</dbReference>
<dbReference type="InterPro" id="IPR036453">
    <property type="entry name" value="GluRdtase_dimer_dom_sf"/>
</dbReference>
<dbReference type="InterPro" id="IPR036343">
    <property type="entry name" value="GluRdtase_N_sf"/>
</dbReference>
<dbReference type="InterPro" id="IPR036291">
    <property type="entry name" value="NAD(P)-bd_dom_sf"/>
</dbReference>
<dbReference type="InterPro" id="IPR006151">
    <property type="entry name" value="Shikm_DH/Glu-tRNA_Rdtase"/>
</dbReference>
<dbReference type="NCBIfam" id="TIGR01035">
    <property type="entry name" value="hemA"/>
    <property type="match status" value="1"/>
</dbReference>
<dbReference type="NCBIfam" id="NF000744">
    <property type="entry name" value="PRK00045.1-3"/>
    <property type="match status" value="1"/>
</dbReference>
<dbReference type="PANTHER" id="PTHR43120">
    <property type="entry name" value="GLUTAMYL-TRNA REDUCTASE 1, CHLOROPLASTIC"/>
    <property type="match status" value="1"/>
</dbReference>
<dbReference type="PANTHER" id="PTHR43120:SF1">
    <property type="entry name" value="GLUTAMYL-TRNA REDUCTASE 1, CHLOROPLASTIC"/>
    <property type="match status" value="1"/>
</dbReference>
<dbReference type="Pfam" id="PF00745">
    <property type="entry name" value="GlutR_dimer"/>
    <property type="match status" value="1"/>
</dbReference>
<dbReference type="Pfam" id="PF05201">
    <property type="entry name" value="GlutR_N"/>
    <property type="match status" value="1"/>
</dbReference>
<dbReference type="Pfam" id="PF01488">
    <property type="entry name" value="Shikimate_DH"/>
    <property type="match status" value="1"/>
</dbReference>
<dbReference type="PIRSF" id="PIRSF000445">
    <property type="entry name" value="4pyrrol_synth_GluRdtase"/>
    <property type="match status" value="1"/>
</dbReference>
<dbReference type="SUPFAM" id="SSF69742">
    <property type="entry name" value="Glutamyl tRNA-reductase catalytic, N-terminal domain"/>
    <property type="match status" value="1"/>
</dbReference>
<dbReference type="SUPFAM" id="SSF69075">
    <property type="entry name" value="Glutamyl tRNA-reductase dimerization domain"/>
    <property type="match status" value="1"/>
</dbReference>
<dbReference type="SUPFAM" id="SSF51735">
    <property type="entry name" value="NAD(P)-binding Rossmann-fold domains"/>
    <property type="match status" value="1"/>
</dbReference>
<dbReference type="PROSITE" id="PS00747">
    <property type="entry name" value="GLUTR"/>
    <property type="match status" value="1"/>
</dbReference>
<reference key="1">
    <citation type="journal article" date="1992" name="J. Biol. Chem.">
        <title>Glutamyl-tRNA reductase from Escherichia coli and Synechocystis 6803. Gene structure and expression.</title>
        <authorList>
            <person name="Verkamp E."/>
            <person name="Jahn M."/>
            <person name="Jahn D."/>
            <person name="Kumar A.M."/>
            <person name="Soell D."/>
        </authorList>
    </citation>
    <scope>NUCLEOTIDE SEQUENCE [GENOMIC DNA]</scope>
    <scope>FUNCTION</scope>
</reference>
<reference key="2">
    <citation type="journal article" date="1992" name="Hereditas">
        <title>Identification of a hemA gene from Synechocystis by complementation of an E. coli hemA mutant.</title>
        <authorList>
            <person name="Grimm B."/>
        </authorList>
    </citation>
    <scope>NUCLEOTIDE SEQUENCE [GENOMIC DNA]</scope>
</reference>
<reference key="3">
    <citation type="journal article" date="1996" name="DNA Res.">
        <title>Sequence analysis of the genome of the unicellular cyanobacterium Synechocystis sp. strain PCC6803. II. Sequence determination of the entire genome and assignment of potential protein-coding regions.</title>
        <authorList>
            <person name="Kaneko T."/>
            <person name="Sato S."/>
            <person name="Kotani H."/>
            <person name="Tanaka A."/>
            <person name="Asamizu E."/>
            <person name="Nakamura Y."/>
            <person name="Miyajima N."/>
            <person name="Hirosawa M."/>
            <person name="Sugiura M."/>
            <person name="Sasamoto S."/>
            <person name="Kimura T."/>
            <person name="Hosouchi T."/>
            <person name="Matsuno A."/>
            <person name="Muraki A."/>
            <person name="Nakazaki N."/>
            <person name="Naruo K."/>
            <person name="Okumura S."/>
            <person name="Shimpo S."/>
            <person name="Takeuchi C."/>
            <person name="Wada T."/>
            <person name="Watanabe A."/>
            <person name="Yamada M."/>
            <person name="Yasuda M."/>
            <person name="Tabata S."/>
        </authorList>
    </citation>
    <scope>NUCLEOTIDE SEQUENCE [LARGE SCALE GENOMIC DNA]</scope>
    <source>
        <strain>ATCC 27184 / PCC 6803 / Kazusa</strain>
    </source>
</reference>
<keyword id="KW-0149">Chlorophyll biosynthesis</keyword>
<keyword id="KW-0521">NADP</keyword>
<keyword id="KW-0560">Oxidoreductase</keyword>
<keyword id="KW-0627">Porphyrin biosynthesis</keyword>
<keyword id="KW-1185">Reference proteome</keyword>
<gene>
    <name evidence="1" type="primary">hemA</name>
    <name type="ordered locus">slr1808</name>
</gene>
<accession>P28463</accession>
<name>HEM1_SYNY3</name>
<proteinExistence type="inferred from homology"/>
<sequence length="427" mass="47526">MNIAVVGLSHKTAPVEIREKLSIQEAKLEEALTHLRSYPHIEEVTVISTCNRLEIYAVVTDTEKGVVEITQFLSETGNIPLATLRRYLFTLLHEDAVRHLMRVAAGLESLVLGEGQILAQVRTTHKLGQKYKGVGRLLDRLFKQAITAGRRVRTETDIGTGAVSISSAAVELVHRQVDLSSQKTVIIGAGKMACLLVKHLLAKGATDITIVNRSQRRSQDLANQFPQAQLTLCPLTDMFTAIAAGDIVFTSTGATEPILNCENLTGCVINRKSLMLVDISVPRNVAADVHAMEQVRAFNVDDLKEVVAQNQASRRQMARQAEALLEEEIAAFDLWWRSLETVPTISSLRSKVEDIREQELEKALSRLGSEFAEKHQEVIEALTRGIVNKILHEPMVQLRAQQDIEARKQCLRSLKMLFDLEVEEQFG</sequence>
<comment type="function">
    <text evidence="3">Catalyzes the NADPH-dependent reduction of glutamyl-tRNA(Glu) to glutamate 1-semialdehyde (GSA).</text>
</comment>
<comment type="catalytic activity">
    <reaction evidence="1">
        <text>(S)-4-amino-5-oxopentanoate + tRNA(Glu) + NADP(+) = L-glutamyl-tRNA(Glu) + NADPH + H(+)</text>
        <dbReference type="Rhea" id="RHEA:12344"/>
        <dbReference type="Rhea" id="RHEA-COMP:9663"/>
        <dbReference type="Rhea" id="RHEA-COMP:9680"/>
        <dbReference type="ChEBI" id="CHEBI:15378"/>
        <dbReference type="ChEBI" id="CHEBI:57501"/>
        <dbReference type="ChEBI" id="CHEBI:57783"/>
        <dbReference type="ChEBI" id="CHEBI:58349"/>
        <dbReference type="ChEBI" id="CHEBI:78442"/>
        <dbReference type="ChEBI" id="CHEBI:78520"/>
        <dbReference type="EC" id="1.2.1.70"/>
    </reaction>
</comment>
<comment type="activity regulation">
    <text>Feedback inhibition by heme.</text>
</comment>
<comment type="pathway">
    <text evidence="1">Porphyrin-containing compound metabolism; protoporphyrin-IX biosynthesis; 5-aminolevulinate from L-glutamyl-tRNA(Glu): step 1/2.</text>
</comment>
<comment type="pathway">
    <text evidence="1">Porphyrin-containing compound metabolism; chlorophyll biosynthesis.</text>
</comment>
<comment type="subunit">
    <text evidence="1">Homodimer.</text>
</comment>
<comment type="domain">
    <text evidence="1">Possesses an unusual extended V-shaped dimeric structure with each monomer consisting of three distinct domains arranged along a curved 'spinal' alpha-helix. The N-terminal catalytic domain specifically recognizes the glutamate moiety of the substrate. The second domain is the NADPH-binding domain, and the third C-terminal domain is responsible for dimerization.</text>
</comment>
<comment type="miscellaneous">
    <text evidence="1">During catalysis, the active site Cys acts as a nucleophile attacking the alpha-carbonyl group of tRNA-bound glutamate with the formation of a thioester intermediate between enzyme and glutamate, and the concomitant release of tRNA(Glu). The thioester intermediate is finally reduced by direct hydride transfer from NADPH, to form the product GSA.</text>
</comment>
<comment type="similarity">
    <text evidence="1">Belongs to the glutamyl-tRNA reductase family.</text>
</comment>
<comment type="sequence caution" evidence="2">
    <conflict type="erroneous initiation">
        <sequence resource="EMBL-CDS" id="BAA17738"/>
    </conflict>
</comment>
<organism>
    <name type="scientific">Synechocystis sp. (strain ATCC 27184 / PCC 6803 / Kazusa)</name>
    <dbReference type="NCBI Taxonomy" id="1111708"/>
    <lineage>
        <taxon>Bacteria</taxon>
        <taxon>Bacillati</taxon>
        <taxon>Cyanobacteriota</taxon>
        <taxon>Cyanophyceae</taxon>
        <taxon>Synechococcales</taxon>
        <taxon>Merismopediaceae</taxon>
        <taxon>Synechocystis</taxon>
    </lineage>
</organism>